<reference key="1">
    <citation type="journal article" date="2003" name="J. Bacteriol.">
        <title>Complete genome sequence of the ammonia-oxidizing bacterium and obligate chemolithoautotroph Nitrosomonas europaea.</title>
        <authorList>
            <person name="Chain P."/>
            <person name="Lamerdin J.E."/>
            <person name="Larimer F.W."/>
            <person name="Regala W."/>
            <person name="Lao V."/>
            <person name="Land M.L."/>
            <person name="Hauser L."/>
            <person name="Hooper A.B."/>
            <person name="Klotz M.G."/>
            <person name="Norton J."/>
            <person name="Sayavedra-Soto L.A."/>
            <person name="Arciero D.M."/>
            <person name="Hommes N.G."/>
            <person name="Whittaker M.M."/>
            <person name="Arp D.J."/>
        </authorList>
    </citation>
    <scope>NUCLEOTIDE SEQUENCE [LARGE SCALE GENOMIC DNA]</scope>
    <source>
        <strain>ATCC 19718 / CIP 103999 / KCTC 2705 / NBRC 14298</strain>
    </source>
</reference>
<name>FMT_NITEU</name>
<proteinExistence type="inferred from homology"/>
<evidence type="ECO:0000255" key="1">
    <source>
        <dbReference type="HAMAP-Rule" id="MF_00182"/>
    </source>
</evidence>
<evidence type="ECO:0000256" key="2">
    <source>
        <dbReference type="SAM" id="MobiDB-lite"/>
    </source>
</evidence>
<protein>
    <recommendedName>
        <fullName evidence="1">Methionyl-tRNA formyltransferase</fullName>
        <ecNumber evidence="1">2.1.2.9</ecNumber>
    </recommendedName>
</protein>
<accession>Q820J7</accession>
<feature type="chain" id="PRO_0000083005" description="Methionyl-tRNA formyltransferase">
    <location>
        <begin position="1"/>
        <end position="324"/>
    </location>
</feature>
<feature type="region of interest" description="Disordered" evidence="2">
    <location>
        <begin position="305"/>
        <end position="324"/>
    </location>
</feature>
<feature type="binding site" evidence="1">
    <location>
        <begin position="109"/>
        <end position="112"/>
    </location>
    <ligand>
        <name>(6S)-5,6,7,8-tetrahydrofolate</name>
        <dbReference type="ChEBI" id="CHEBI:57453"/>
    </ligand>
</feature>
<gene>
    <name evidence="1" type="primary">fmt</name>
    <name type="ordered locus">NE1971</name>
</gene>
<keyword id="KW-0648">Protein biosynthesis</keyword>
<keyword id="KW-1185">Reference proteome</keyword>
<keyword id="KW-0808">Transferase</keyword>
<organism>
    <name type="scientific">Nitrosomonas europaea (strain ATCC 19718 / CIP 103999 / KCTC 2705 / NBRC 14298)</name>
    <dbReference type="NCBI Taxonomy" id="228410"/>
    <lineage>
        <taxon>Bacteria</taxon>
        <taxon>Pseudomonadati</taxon>
        <taxon>Pseudomonadota</taxon>
        <taxon>Betaproteobacteria</taxon>
        <taxon>Nitrosomonadales</taxon>
        <taxon>Nitrosomonadaceae</taxon>
        <taxon>Nitrosomonas</taxon>
    </lineage>
</organism>
<dbReference type="EC" id="2.1.2.9" evidence="1"/>
<dbReference type="EMBL" id="AL954747">
    <property type="protein sequence ID" value="CAD85882.1"/>
    <property type="molecule type" value="Genomic_DNA"/>
</dbReference>
<dbReference type="RefSeq" id="WP_011112502.1">
    <property type="nucleotide sequence ID" value="NC_004757.1"/>
</dbReference>
<dbReference type="SMR" id="Q820J7"/>
<dbReference type="STRING" id="228410.NE1971"/>
<dbReference type="GeneID" id="87105124"/>
<dbReference type="KEGG" id="neu:NE1971"/>
<dbReference type="eggNOG" id="COG0223">
    <property type="taxonomic scope" value="Bacteria"/>
</dbReference>
<dbReference type="HOGENOM" id="CLU_033347_1_2_4"/>
<dbReference type="OrthoDB" id="9802815at2"/>
<dbReference type="PhylomeDB" id="Q820J7"/>
<dbReference type="Proteomes" id="UP000001416">
    <property type="component" value="Chromosome"/>
</dbReference>
<dbReference type="GO" id="GO:0005829">
    <property type="term" value="C:cytosol"/>
    <property type="evidence" value="ECO:0007669"/>
    <property type="project" value="TreeGrafter"/>
</dbReference>
<dbReference type="GO" id="GO:0004479">
    <property type="term" value="F:methionyl-tRNA formyltransferase activity"/>
    <property type="evidence" value="ECO:0007669"/>
    <property type="project" value="UniProtKB-UniRule"/>
</dbReference>
<dbReference type="CDD" id="cd08646">
    <property type="entry name" value="FMT_core_Met-tRNA-FMT_N"/>
    <property type="match status" value="1"/>
</dbReference>
<dbReference type="CDD" id="cd08704">
    <property type="entry name" value="Met_tRNA_FMT_C"/>
    <property type="match status" value="1"/>
</dbReference>
<dbReference type="FunFam" id="3.40.50.12230:FF:000001">
    <property type="entry name" value="Methionyl-tRNA formyltransferase"/>
    <property type="match status" value="1"/>
</dbReference>
<dbReference type="Gene3D" id="3.10.25.10">
    <property type="entry name" value="Formyl transferase, C-terminal domain"/>
    <property type="match status" value="1"/>
</dbReference>
<dbReference type="Gene3D" id="3.40.50.170">
    <property type="entry name" value="Formyl transferase, N-terminal domain"/>
    <property type="match status" value="1"/>
</dbReference>
<dbReference type="HAMAP" id="MF_00182">
    <property type="entry name" value="Formyl_trans"/>
    <property type="match status" value="1"/>
</dbReference>
<dbReference type="InterPro" id="IPR005794">
    <property type="entry name" value="Fmt"/>
</dbReference>
<dbReference type="InterPro" id="IPR005793">
    <property type="entry name" value="Formyl_trans_C"/>
</dbReference>
<dbReference type="InterPro" id="IPR037022">
    <property type="entry name" value="Formyl_trans_C_sf"/>
</dbReference>
<dbReference type="InterPro" id="IPR002376">
    <property type="entry name" value="Formyl_transf_N"/>
</dbReference>
<dbReference type="InterPro" id="IPR036477">
    <property type="entry name" value="Formyl_transf_N_sf"/>
</dbReference>
<dbReference type="InterPro" id="IPR011034">
    <property type="entry name" value="Formyl_transferase-like_C_sf"/>
</dbReference>
<dbReference type="InterPro" id="IPR044135">
    <property type="entry name" value="Met-tRNA-FMT_C"/>
</dbReference>
<dbReference type="InterPro" id="IPR041711">
    <property type="entry name" value="Met-tRNA-FMT_N"/>
</dbReference>
<dbReference type="NCBIfam" id="TIGR00460">
    <property type="entry name" value="fmt"/>
    <property type="match status" value="1"/>
</dbReference>
<dbReference type="PANTHER" id="PTHR11138">
    <property type="entry name" value="METHIONYL-TRNA FORMYLTRANSFERASE"/>
    <property type="match status" value="1"/>
</dbReference>
<dbReference type="PANTHER" id="PTHR11138:SF5">
    <property type="entry name" value="METHIONYL-TRNA FORMYLTRANSFERASE, MITOCHONDRIAL"/>
    <property type="match status" value="1"/>
</dbReference>
<dbReference type="Pfam" id="PF02911">
    <property type="entry name" value="Formyl_trans_C"/>
    <property type="match status" value="1"/>
</dbReference>
<dbReference type="Pfam" id="PF00551">
    <property type="entry name" value="Formyl_trans_N"/>
    <property type="match status" value="1"/>
</dbReference>
<dbReference type="SUPFAM" id="SSF50486">
    <property type="entry name" value="FMT C-terminal domain-like"/>
    <property type="match status" value="1"/>
</dbReference>
<dbReference type="SUPFAM" id="SSF53328">
    <property type="entry name" value="Formyltransferase"/>
    <property type="match status" value="1"/>
</dbReference>
<comment type="function">
    <text evidence="1">Attaches a formyl group to the free amino group of methionyl-tRNA(fMet). The formyl group appears to play a dual role in the initiator identity of N-formylmethionyl-tRNA by promoting its recognition by IF2 and preventing the misappropriation of this tRNA by the elongation apparatus.</text>
</comment>
<comment type="catalytic activity">
    <reaction evidence="1">
        <text>L-methionyl-tRNA(fMet) + (6R)-10-formyltetrahydrofolate = N-formyl-L-methionyl-tRNA(fMet) + (6S)-5,6,7,8-tetrahydrofolate + H(+)</text>
        <dbReference type="Rhea" id="RHEA:24380"/>
        <dbReference type="Rhea" id="RHEA-COMP:9952"/>
        <dbReference type="Rhea" id="RHEA-COMP:9953"/>
        <dbReference type="ChEBI" id="CHEBI:15378"/>
        <dbReference type="ChEBI" id="CHEBI:57453"/>
        <dbReference type="ChEBI" id="CHEBI:78530"/>
        <dbReference type="ChEBI" id="CHEBI:78844"/>
        <dbReference type="ChEBI" id="CHEBI:195366"/>
        <dbReference type="EC" id="2.1.2.9"/>
    </reaction>
</comment>
<comment type="similarity">
    <text evidence="1">Belongs to the Fmt family.</text>
</comment>
<sequence length="324" mass="35217">MRIIFAGTPDFAARALEELQKAGLDIVLTLTQPDRPAGRGMKMQASPVKILAQQYDIPLLQPETLKSSDIQAQLATFKPDVMIVAAYGLLLPEAVLRIPRHGCINIHASLLPRWRGAAPIQRALLEGDTETGISIMQMNQGLDTGAVLLKRSLPIEPYDTTATLHDKLADLGGKCIVEALTLLDQGRLISEPQNEVDACYAAKIRKIEAEIDWTCDAAYIDRMIRTFDPHPGAFTHLQGNTIKLWQARIVSHVNHNSSHQAGKIITVDPDGIVVACGRDALSIDILQKAGGKKLTAAQFLAGHPLHPGESFHKATQDNQGASET</sequence>